<comment type="function">
    <text evidence="4">Cytochrome P450 monooxygenase involved in the biosynthesis of aromatic piperamides natural products such as piperine (1-piperoyl-piperidine), the pungent principle contributing, together with several terpenoids, to the aromatic properties of black pepper fruits, and displaying numerous pharmacological activities such as antiproliferative, antitumor, antiangiogenesis, antioxidant, antidiabetic, antiobesity, cardioprotective, antimicrobial, antiaging, and immunomodulatory effects (PubMed:33435446). Catalyzes the conversion of feruperic acid (5-(4-hydroxy-3-methoxyphenyl)-2,4-pentadienoic acid) to piperic acid (PubMed:33435446). Inactive toward ferulic acid and feruperine (PubMed:33435446).</text>
</comment>
<comment type="catalytic activity">
    <reaction evidence="4">
        <text>(E,E)-feruperate + reduced [NADPH--hemoprotein reductase] + O2 = (E,E)-piperate + oxidized [NADPH--hemoprotein reductase] + 2 H2O + H(+)</text>
        <dbReference type="Rhea" id="RHEA:73555"/>
        <dbReference type="Rhea" id="RHEA-COMP:11964"/>
        <dbReference type="Rhea" id="RHEA-COMP:11965"/>
        <dbReference type="ChEBI" id="CHEBI:15377"/>
        <dbReference type="ChEBI" id="CHEBI:15378"/>
        <dbReference type="ChEBI" id="CHEBI:15379"/>
        <dbReference type="ChEBI" id="CHEBI:57618"/>
        <dbReference type="ChEBI" id="CHEBI:58210"/>
        <dbReference type="ChEBI" id="CHEBI:192831"/>
        <dbReference type="ChEBI" id="CHEBI:192832"/>
    </reaction>
    <physiologicalReaction direction="left-to-right" evidence="4">
        <dbReference type="Rhea" id="RHEA:73556"/>
    </physiologicalReaction>
</comment>
<comment type="cofactor">
    <cofactor evidence="2">
        <name>heme</name>
        <dbReference type="ChEBI" id="CHEBI:30413"/>
    </cofactor>
</comment>
<comment type="pathway">
    <text evidence="4">Aromatic compound metabolism.</text>
</comment>
<comment type="subcellular location">
    <subcellularLocation>
        <location evidence="3">Membrane</location>
        <topology evidence="3">Single-pass membrane protein</topology>
    </subcellularLocation>
    <subcellularLocation>
        <location evidence="1">Endoplasmic reticulum membrane</location>
        <topology evidence="3">Single-pass membrane protein</topology>
    </subcellularLocation>
</comment>
<comment type="tissue specificity">
    <text evidence="4">Specifically expressed in immature fruits and roots (PubMed:33435446). Barely detectable in young leaves and flowering spadices (PubMed:33435446).</text>
</comment>
<comment type="developmental stage">
    <text evidence="4">Mostly expressed during fruit development.</text>
</comment>
<comment type="similarity">
    <text evidence="6">Belongs to the cytochrome P450 family.</text>
</comment>
<gene>
    <name evidence="5" type="primary">CYP719A37</name>
</gene>
<proteinExistence type="evidence at protein level"/>
<reference key="1">
    <citation type="journal article" date="2021" name="Plants (Basel)">
        <title>Piper nigrum CYP719A37 catalyzes the decisive methylenedioxy bridge formation in piperine biosynthesis.</title>
        <authorList>
            <person name="Schnabel A."/>
            <person name="Cotinguiba F."/>
            <person name="Athmer B."/>
            <person name="Vogt T."/>
        </authorList>
    </citation>
    <scope>NUCLEOTIDE SEQUENCE [MRNA]</scope>
    <scope>FUNCTION</scope>
    <scope>CATALYTIC ACTIVITY</scope>
    <scope>TISSUE SPECIFICITY</scope>
    <scope>DEVELOPMENTAL STAGE</scope>
    <scope>PATHWAY</scope>
    <source>
        <tissue>Fruit</tissue>
    </source>
</reference>
<organism>
    <name type="scientific">Piper nigrum</name>
    <name type="common">Black pepper</name>
    <dbReference type="NCBI Taxonomy" id="13216"/>
    <lineage>
        <taxon>Eukaryota</taxon>
        <taxon>Viridiplantae</taxon>
        <taxon>Streptophyta</taxon>
        <taxon>Embryophyta</taxon>
        <taxon>Tracheophyta</taxon>
        <taxon>Spermatophyta</taxon>
        <taxon>Magnoliopsida</taxon>
        <taxon>Magnoliidae</taxon>
        <taxon>Piperales</taxon>
        <taxon>Piperaceae</taxon>
        <taxon>Piper</taxon>
    </lineage>
</organism>
<feature type="chain" id="PRO_0000459766" description="Piperic acid synthase CYP719A37">
    <location>
        <begin position="1"/>
        <end position="511"/>
    </location>
</feature>
<feature type="transmembrane region" description="Helical" evidence="3">
    <location>
        <begin position="7"/>
        <end position="27"/>
    </location>
</feature>
<feature type="binding site" description="axial binding residue" evidence="2">
    <location>
        <position position="455"/>
    </location>
    <ligand>
        <name>heme</name>
        <dbReference type="ChEBI" id="CHEBI:30413"/>
    </ligand>
    <ligandPart>
        <name>Fe</name>
        <dbReference type="ChEBI" id="CHEBI:18248"/>
    </ligandPart>
</feature>
<sequence>MEQAQWVDPALFSAFVSIIFFFLGMFLGRISLGVGKGAAPRSPSSTEWPDGPPKLPIIGNLHQLNKGGELVHHKLAKLAQSYDRAMTIWVGSWGPMIVVSDADLAWEVLVTKSPDFAGRVLSKLSHLFNADYNTVVAYDAGPQWQSLRRGLQHGPLGPAHVSAQARFHEEDMKLLVSDMMRAAKKGGNNGVVEPLAYVRRATIRFLSRLCFGEAFNDEAFVEGMDEAVEETIRATGHARILDAFYFTRHLPIIRRSFMNTVAAKKKIESLVRPLLSRPAPPGSYLHFLLSTDAPESMIIFRIFEVYLLGVDSTASTTTWALAFLVSNQQAQEKLHNELAQYCASQNNQNIKAEDVGKLSYLLGVVKETMRMKPIAPLAVPHKTLKETMLDGKRVAAGTTVVVNLYAVHYNPKLWPEPEQFRPERFVIGASGGNGGGSSEYMLQSYLPFGGGMRACAGMEVGKLQVAMVVANLVMSFKWLPEAEGKMPDLAEDMTFVLMMKKPLAAKIVPRA</sequence>
<name>C719A_PIPNI</name>
<evidence type="ECO:0000250" key="1">
    <source>
        <dbReference type="UniProtKB" id="P00185"/>
    </source>
</evidence>
<evidence type="ECO:0000250" key="2">
    <source>
        <dbReference type="UniProtKB" id="P04798"/>
    </source>
</evidence>
<evidence type="ECO:0000255" key="3"/>
<evidence type="ECO:0000269" key="4">
    <source>
    </source>
</evidence>
<evidence type="ECO:0000303" key="5">
    <source>
    </source>
</evidence>
<evidence type="ECO:0000305" key="6"/>
<evidence type="ECO:0000305" key="7">
    <source>
    </source>
</evidence>
<accession>A0A7T9QPT0</accession>
<dbReference type="EC" id="1.14.19.-" evidence="4"/>
<dbReference type="EMBL" id="MT643912">
    <property type="protein sequence ID" value="QQS74306.1"/>
    <property type="molecule type" value="mRNA"/>
</dbReference>
<dbReference type="SMR" id="A0A7T9QPT0"/>
<dbReference type="BioCyc" id="MetaCyc:MONOMER-124270"/>
<dbReference type="GO" id="GO:0005789">
    <property type="term" value="C:endoplasmic reticulum membrane"/>
    <property type="evidence" value="ECO:0007669"/>
    <property type="project" value="UniProtKB-SubCell"/>
</dbReference>
<dbReference type="GO" id="GO:0020037">
    <property type="term" value="F:heme binding"/>
    <property type="evidence" value="ECO:0007669"/>
    <property type="project" value="InterPro"/>
</dbReference>
<dbReference type="GO" id="GO:0005506">
    <property type="term" value="F:iron ion binding"/>
    <property type="evidence" value="ECO:0007669"/>
    <property type="project" value="InterPro"/>
</dbReference>
<dbReference type="GO" id="GO:0004497">
    <property type="term" value="F:monooxygenase activity"/>
    <property type="evidence" value="ECO:0007669"/>
    <property type="project" value="UniProtKB-KW"/>
</dbReference>
<dbReference type="GO" id="GO:0016705">
    <property type="term" value="F:oxidoreductase activity, acting on paired donors, with incorporation or reduction of molecular oxygen"/>
    <property type="evidence" value="ECO:0007669"/>
    <property type="project" value="InterPro"/>
</dbReference>
<dbReference type="Gene3D" id="1.10.630.10">
    <property type="entry name" value="Cytochrome P450"/>
    <property type="match status" value="1"/>
</dbReference>
<dbReference type="InterPro" id="IPR001128">
    <property type="entry name" value="Cyt_P450"/>
</dbReference>
<dbReference type="InterPro" id="IPR017972">
    <property type="entry name" value="Cyt_P450_CS"/>
</dbReference>
<dbReference type="InterPro" id="IPR002401">
    <property type="entry name" value="Cyt_P450_E_grp-I"/>
</dbReference>
<dbReference type="InterPro" id="IPR036396">
    <property type="entry name" value="Cyt_P450_sf"/>
</dbReference>
<dbReference type="PANTHER" id="PTHR24281">
    <property type="entry name" value="STEROID 21-HYDROXYLASE-RELATED"/>
    <property type="match status" value="1"/>
</dbReference>
<dbReference type="Pfam" id="PF00067">
    <property type="entry name" value="p450"/>
    <property type="match status" value="1"/>
</dbReference>
<dbReference type="PRINTS" id="PR00463">
    <property type="entry name" value="EP450I"/>
</dbReference>
<dbReference type="PRINTS" id="PR00385">
    <property type="entry name" value="P450"/>
</dbReference>
<dbReference type="SUPFAM" id="SSF48264">
    <property type="entry name" value="Cytochrome P450"/>
    <property type="match status" value="1"/>
</dbReference>
<dbReference type="PROSITE" id="PS00086">
    <property type="entry name" value="CYTOCHROME_P450"/>
    <property type="match status" value="1"/>
</dbReference>
<protein>
    <recommendedName>
        <fullName evidence="7">Piperic acid synthase CYP719A37</fullName>
        <ecNumber evidence="4">1.14.19.-</ecNumber>
    </recommendedName>
    <alternativeName>
        <fullName evidence="5">Cytochrome P450 dependent monooxygenase 719A37</fullName>
        <shortName evidence="5">PnCYP719</shortName>
    </alternativeName>
</protein>
<keyword id="KW-0256">Endoplasmic reticulum</keyword>
<keyword id="KW-0349">Heme</keyword>
<keyword id="KW-0408">Iron</keyword>
<keyword id="KW-0472">Membrane</keyword>
<keyword id="KW-0479">Metal-binding</keyword>
<keyword id="KW-0503">Monooxygenase</keyword>
<keyword id="KW-0560">Oxidoreductase</keyword>
<keyword id="KW-0812">Transmembrane</keyword>
<keyword id="KW-1133">Transmembrane helix</keyword>